<proteinExistence type="evidence at protein level"/>
<accession>A6NF83</accession>
<dbReference type="EMBL" id="AC006970">
    <property type="status" value="NOT_ANNOTATED_CDS"/>
    <property type="molecule type" value="Genomic_DNA"/>
</dbReference>
<dbReference type="EMBL" id="BC043523">
    <property type="status" value="NOT_ANNOTATED_CDS"/>
    <property type="molecule type" value="mRNA"/>
</dbReference>
<dbReference type="CCDS" id="CCDS59058.1"/>
<dbReference type="RefSeq" id="NP_001139184.1">
    <property type="nucleotide sequence ID" value="NM_001145712.2"/>
</dbReference>
<dbReference type="FunCoup" id="A6NF83">
    <property type="interactions" value="48"/>
</dbReference>
<dbReference type="STRING" id="9606.ENSP00000455442"/>
<dbReference type="PhosphoSitePlus" id="A6NF83"/>
<dbReference type="BioMuta" id="NUPR2"/>
<dbReference type="MassIVE" id="A6NF83"/>
<dbReference type="PaxDb" id="9606-ENSP00000455442"/>
<dbReference type="PeptideAtlas" id="A6NF83"/>
<dbReference type="DNASU" id="389493"/>
<dbReference type="Ensembl" id="ENST00000329309.4">
    <property type="protein sequence ID" value="ENSP00000455442.1"/>
    <property type="gene ID" value="ENSG00000185290.4"/>
</dbReference>
<dbReference type="GeneID" id="389493"/>
<dbReference type="KEGG" id="hsa:389493"/>
<dbReference type="MANE-Select" id="ENST00000329309.4">
    <property type="protein sequence ID" value="ENSP00000455442.1"/>
    <property type="RefSeq nucleotide sequence ID" value="NM_001145712.2"/>
    <property type="RefSeq protein sequence ID" value="NP_001139184.1"/>
</dbReference>
<dbReference type="UCSC" id="uc003tsb.4">
    <property type="organism name" value="human"/>
</dbReference>
<dbReference type="AGR" id="HGNC:44164"/>
<dbReference type="CTD" id="389493"/>
<dbReference type="DisGeNET" id="389493"/>
<dbReference type="GeneCards" id="NUPR2"/>
<dbReference type="HGNC" id="HGNC:44164">
    <property type="gene designation" value="NUPR2"/>
</dbReference>
<dbReference type="HPA" id="ENSG00000185290">
    <property type="expression patterns" value="Tissue enriched (testis)"/>
</dbReference>
<dbReference type="neXtProt" id="NX_A6NF83"/>
<dbReference type="OpenTargets" id="ENSG00000185290"/>
<dbReference type="VEuPathDB" id="HostDB:ENSG00000185290"/>
<dbReference type="eggNOG" id="KOG4319">
    <property type="taxonomic scope" value="Eukaryota"/>
</dbReference>
<dbReference type="GeneTree" id="ENSGT00530000064242"/>
<dbReference type="HOGENOM" id="CLU_180450_1_0_1"/>
<dbReference type="InParanoid" id="A6NF83"/>
<dbReference type="OMA" id="KYHNSEM"/>
<dbReference type="OrthoDB" id="10030453at2759"/>
<dbReference type="PAN-GO" id="A6NF83">
    <property type="GO annotations" value="4 GO annotations based on evolutionary models"/>
</dbReference>
<dbReference type="PhylomeDB" id="A6NF83"/>
<dbReference type="PathwayCommons" id="A6NF83"/>
<dbReference type="BioGRID-ORCS" id="389493">
    <property type="hits" value="27 hits in 1122 CRISPR screens"/>
</dbReference>
<dbReference type="GenomeRNAi" id="389493"/>
<dbReference type="Pharos" id="A6NF83">
    <property type="development level" value="Tbio"/>
</dbReference>
<dbReference type="PRO" id="PR:A6NF83"/>
<dbReference type="Proteomes" id="UP000005640">
    <property type="component" value="Chromosome 7"/>
</dbReference>
<dbReference type="RNAct" id="A6NF83">
    <property type="molecule type" value="protein"/>
</dbReference>
<dbReference type="Bgee" id="ENSG00000185290">
    <property type="expression patterns" value="Expressed in left testis and 86 other cell types or tissues"/>
</dbReference>
<dbReference type="GO" id="GO:0005634">
    <property type="term" value="C:nucleus"/>
    <property type="evidence" value="ECO:0000314"/>
    <property type="project" value="UniProtKB"/>
</dbReference>
<dbReference type="GO" id="GO:0009267">
    <property type="term" value="P:cellular response to starvation"/>
    <property type="evidence" value="ECO:0000314"/>
    <property type="project" value="UniProtKB"/>
</dbReference>
<dbReference type="GO" id="GO:0006974">
    <property type="term" value="P:DNA damage response"/>
    <property type="evidence" value="ECO:0000314"/>
    <property type="project" value="UniProtKB"/>
</dbReference>
<dbReference type="GO" id="GO:0045786">
    <property type="term" value="P:negative regulation of cell cycle"/>
    <property type="evidence" value="ECO:0000318"/>
    <property type="project" value="GO_Central"/>
</dbReference>
<dbReference type="GO" id="GO:0008285">
    <property type="term" value="P:negative regulation of cell population proliferation"/>
    <property type="evidence" value="ECO:0000314"/>
    <property type="project" value="UniProtKB"/>
</dbReference>
<dbReference type="GO" id="GO:0000122">
    <property type="term" value="P:negative regulation of transcription by RNA polymerase II"/>
    <property type="evidence" value="ECO:0000314"/>
    <property type="project" value="UniProtKB"/>
</dbReference>
<dbReference type="GO" id="GO:0051726">
    <property type="term" value="P:regulation of cell cycle"/>
    <property type="evidence" value="ECO:0000314"/>
    <property type="project" value="UniProtKB"/>
</dbReference>
<dbReference type="GO" id="GO:0006357">
    <property type="term" value="P:regulation of transcription by RNA polymerase II"/>
    <property type="evidence" value="ECO:0000318"/>
    <property type="project" value="GO_Central"/>
</dbReference>
<dbReference type="DisProt" id="DP01159"/>
<dbReference type="InterPro" id="IPR018792">
    <property type="entry name" value="NUPR1-like"/>
</dbReference>
<dbReference type="PANTHER" id="PTHR17149">
    <property type="entry name" value="NUCLEAR PROTEIN 1 AND 2"/>
    <property type="match status" value="1"/>
</dbReference>
<dbReference type="PANTHER" id="PTHR17149:SF3">
    <property type="entry name" value="NUCLEAR PROTEIN 2"/>
    <property type="match status" value="1"/>
</dbReference>
<dbReference type="Pfam" id="PF10195">
    <property type="entry name" value="Phospho_p8"/>
    <property type="match status" value="1"/>
</dbReference>
<organism>
    <name type="scientific">Homo sapiens</name>
    <name type="common">Human</name>
    <dbReference type="NCBI Taxonomy" id="9606"/>
    <lineage>
        <taxon>Eukaryota</taxon>
        <taxon>Metazoa</taxon>
        <taxon>Chordata</taxon>
        <taxon>Craniata</taxon>
        <taxon>Vertebrata</taxon>
        <taxon>Euteleostomi</taxon>
        <taxon>Mammalia</taxon>
        <taxon>Eutheria</taxon>
        <taxon>Euarchontoglires</taxon>
        <taxon>Primates</taxon>
        <taxon>Haplorrhini</taxon>
        <taxon>Catarrhini</taxon>
        <taxon>Hominidae</taxon>
        <taxon>Homo</taxon>
    </lineage>
</organism>
<reference key="1">
    <citation type="journal article" date="2003" name="Nature">
        <title>The DNA sequence of human chromosome 7.</title>
        <authorList>
            <person name="Hillier L.W."/>
            <person name="Fulton R.S."/>
            <person name="Fulton L.A."/>
            <person name="Graves T.A."/>
            <person name="Pepin K.H."/>
            <person name="Wagner-McPherson C."/>
            <person name="Layman D."/>
            <person name="Maas J."/>
            <person name="Jaeger S."/>
            <person name="Walker R."/>
            <person name="Wylie K."/>
            <person name="Sekhon M."/>
            <person name="Becker M.C."/>
            <person name="O'Laughlin M.D."/>
            <person name="Schaller M.E."/>
            <person name="Fewell G.A."/>
            <person name="Delehaunty K.D."/>
            <person name="Miner T.L."/>
            <person name="Nash W.E."/>
            <person name="Cordes M."/>
            <person name="Du H."/>
            <person name="Sun H."/>
            <person name="Edwards J."/>
            <person name="Bradshaw-Cordum H."/>
            <person name="Ali J."/>
            <person name="Andrews S."/>
            <person name="Isak A."/>
            <person name="Vanbrunt A."/>
            <person name="Nguyen C."/>
            <person name="Du F."/>
            <person name="Lamar B."/>
            <person name="Courtney L."/>
            <person name="Kalicki J."/>
            <person name="Ozersky P."/>
            <person name="Bielicki L."/>
            <person name="Scott K."/>
            <person name="Holmes A."/>
            <person name="Harkins R."/>
            <person name="Harris A."/>
            <person name="Strong C.M."/>
            <person name="Hou S."/>
            <person name="Tomlinson C."/>
            <person name="Dauphin-Kohlberg S."/>
            <person name="Kozlowicz-Reilly A."/>
            <person name="Leonard S."/>
            <person name="Rohlfing T."/>
            <person name="Rock S.M."/>
            <person name="Tin-Wollam A.-M."/>
            <person name="Abbott A."/>
            <person name="Minx P."/>
            <person name="Maupin R."/>
            <person name="Strowmatt C."/>
            <person name="Latreille P."/>
            <person name="Miller N."/>
            <person name="Johnson D."/>
            <person name="Murray J."/>
            <person name="Woessner J.P."/>
            <person name="Wendl M.C."/>
            <person name="Yang S.-P."/>
            <person name="Schultz B.R."/>
            <person name="Wallis J.W."/>
            <person name="Spieth J."/>
            <person name="Bieri T.A."/>
            <person name="Nelson J.O."/>
            <person name="Berkowicz N."/>
            <person name="Wohldmann P.E."/>
            <person name="Cook L.L."/>
            <person name="Hickenbotham M.T."/>
            <person name="Eldred J."/>
            <person name="Williams D."/>
            <person name="Bedell J.A."/>
            <person name="Mardis E.R."/>
            <person name="Clifton S.W."/>
            <person name="Chissoe S.L."/>
            <person name="Marra M.A."/>
            <person name="Raymond C."/>
            <person name="Haugen E."/>
            <person name="Gillett W."/>
            <person name="Zhou Y."/>
            <person name="James R."/>
            <person name="Phelps K."/>
            <person name="Iadanoto S."/>
            <person name="Bubb K."/>
            <person name="Simms E."/>
            <person name="Levy R."/>
            <person name="Clendenning J."/>
            <person name="Kaul R."/>
            <person name="Kent W.J."/>
            <person name="Furey T.S."/>
            <person name="Baertsch R.A."/>
            <person name="Brent M.R."/>
            <person name="Keibler E."/>
            <person name="Flicek P."/>
            <person name="Bork P."/>
            <person name="Suyama M."/>
            <person name="Bailey J.A."/>
            <person name="Portnoy M.E."/>
            <person name="Torrents D."/>
            <person name="Chinwalla A.T."/>
            <person name="Gish W.R."/>
            <person name="Eddy S.R."/>
            <person name="McPherson J.D."/>
            <person name="Olson M.V."/>
            <person name="Eichler E.E."/>
            <person name="Green E.D."/>
            <person name="Waterston R.H."/>
            <person name="Wilson R.K."/>
        </authorList>
    </citation>
    <scope>NUCLEOTIDE SEQUENCE [LARGE SCALE GENOMIC DNA]</scope>
</reference>
<reference key="2">
    <citation type="journal article" date="2004" name="Genome Res.">
        <title>The status, quality, and expansion of the NIH full-length cDNA project: the Mammalian Gene Collection (MGC).</title>
        <authorList>
            <consortium name="The MGC Project Team"/>
        </authorList>
    </citation>
    <scope>NUCLEOTIDE SEQUENCE [LARGE SCALE MRNA]</scope>
</reference>
<reference key="3">
    <citation type="journal article" date="2015" name="J. Cell. Physiol.">
        <title>Functional characterization of Nupr1L, a novel p53-regulated isoform of the high-mobility group (HMG)-related protumoral protein Nupr1.</title>
        <authorList>
            <person name="Lopez M.B."/>
            <person name="Garcia M.N."/>
            <person name="Grasso D."/>
            <person name="Bintz J."/>
            <person name="Molejon M.I."/>
            <person name="Velez G."/>
            <person name="Lomberk G."/>
            <person name="Neira J.L."/>
            <person name="Urrutia R."/>
            <person name="Iovanna J."/>
        </authorList>
    </citation>
    <scope>FUNCTION</scope>
    <scope>SUBCELLULAR LOCATION</scope>
    <scope>INDUCTION BY TP53</scope>
</reference>
<keyword id="KW-0131">Cell cycle</keyword>
<keyword id="KW-0338">Growth arrest</keyword>
<keyword id="KW-0539">Nucleus</keyword>
<keyword id="KW-1267">Proteomics identification</keyword>
<keyword id="KW-1185">Reference proteome</keyword>
<keyword id="KW-0678">Repressor</keyword>
<keyword id="KW-0804">Transcription</keyword>
<keyword id="KW-0805">Transcription regulation</keyword>
<comment type="function">
    <text evidence="2">Acts as a transcriptional repressor by inhibiting gene expression at the NUPR1 promoter in a p53/TP53-dependent manner in cancer cells (PubMed:25899918). Involved in the G1 cell cycle arrest, and in a decrease in cell viability and cell proliferation (PubMed:25899918). Plays a role as a negative regulator of the protumoral factor NUPR1 (PubMed:25899918).</text>
</comment>
<comment type="subcellular location">
    <subcellularLocation>
        <location evidence="2">Nucleus</location>
    </subcellularLocation>
</comment>
<comment type="induction">
    <text evidence="2">Up-regulated by p53/TP53 in cancer cells (PubMed:25899918). Up-regulated by DNA damage stimulus or starvation (PubMed:25899918).</text>
</comment>
<comment type="similarity">
    <text evidence="4">Belongs to the NUPR family.</text>
</comment>
<sequence length="97" mass="11356">MEAPAERALPRLQALARPPPPISYEEELYDCLDYYYLRDFPACGAGRSKGRTRREQALRTNWPAPGGHERKVAQKLLNGQRKRRQRQLHPKMRTRLT</sequence>
<feature type="chain" id="PRO_0000346768" description="Nuclear protein 2">
    <location>
        <begin position="1"/>
        <end position="97"/>
    </location>
</feature>
<feature type="region of interest" description="Disordered" evidence="1">
    <location>
        <begin position="76"/>
        <end position="97"/>
    </location>
</feature>
<feature type="compositionally biased region" description="Basic residues" evidence="1">
    <location>
        <begin position="80"/>
        <end position="97"/>
    </location>
</feature>
<gene>
    <name evidence="5" type="primary">NUPR2</name>
    <name evidence="3" type="synonym">NUPR1L</name>
</gene>
<evidence type="ECO:0000256" key="1">
    <source>
        <dbReference type="SAM" id="MobiDB-lite"/>
    </source>
</evidence>
<evidence type="ECO:0000269" key="2">
    <source>
    </source>
</evidence>
<evidence type="ECO:0000303" key="3">
    <source>
    </source>
</evidence>
<evidence type="ECO:0000305" key="4"/>
<evidence type="ECO:0000312" key="5">
    <source>
        <dbReference type="HGNC" id="HGNC:44164"/>
    </source>
</evidence>
<protein>
    <recommendedName>
        <fullName evidence="4">Nuclear protein 2</fullName>
    </recommendedName>
    <alternativeName>
        <fullName evidence="3">Nuclear transcriptional regulator 1-like protein</fullName>
    </alternativeName>
    <alternativeName>
        <fullName evidence="5">Nuclear transcriptional regulator protein 2</fullName>
    </alternativeName>
</protein>
<name>NUPR2_HUMAN</name>